<sequence>MIKMTGVQKYFGDFHALTDIDLEIPRGQVVVVLGPSGSGKSTLCRTINRLETIEEGTIEIDGKVLPEEGKGLANLRADVGMVFQSFNLFPHLTIKDNVTLAPIKVRKMKKSEAEKLAMSLLERVGIANQADKYPAQLSGGQQQRVAIARALAMNPKIMLFDEPTSALDPEMVNEVLDVMASLAKEGMTMVCVTHEMGFARKAADRVLFMADGLIVEDTEPDSFFTNPKSDRAKDFLGKILAH</sequence>
<reference key="1">
    <citation type="journal article" date="1995" name="J. Bacteriol.">
        <title>Structure of the gluABCD cluster encoding the glutamate uptake system of Corynebacterium glutamicum.</title>
        <authorList>
            <person name="Kronemeyer W."/>
            <person name="Peekhaus N."/>
            <person name="Kraemer R."/>
            <person name="Sahm H."/>
            <person name="Eggeling L."/>
        </authorList>
    </citation>
    <scope>NUCLEOTIDE SEQUENCE [GENOMIC DNA]</scope>
    <scope>FUNCTION</scope>
    <scope>SUBUNIT</scope>
    <scope>DISRUPTION PHENOTYPE</scope>
    <source>
        <strain>ATCC 13032 / DSM 20300 / JCM 1318 / BCRC 11384 / CCUG 27702 / LMG 3730 / NBRC 12168 / NCIMB 10025 / NRRL B-2784 / 534</strain>
    </source>
</reference>
<reference key="2">
    <citation type="journal article" date="2003" name="Appl. Microbiol. Biotechnol.">
        <title>The Corynebacterium glutamicum genome: features and impacts on biotechnological processes.</title>
        <authorList>
            <person name="Ikeda M."/>
            <person name="Nakagawa S."/>
        </authorList>
    </citation>
    <scope>NUCLEOTIDE SEQUENCE [LARGE SCALE GENOMIC DNA]</scope>
    <source>
        <strain>ATCC 13032 / DSM 20300 / JCM 1318 / BCRC 11384 / CCUG 27702 / LMG 3730 / NBRC 12168 / NCIMB 10025 / NRRL B-2784 / 534</strain>
    </source>
</reference>
<reference key="3">
    <citation type="journal article" date="2003" name="J. Biotechnol.">
        <title>The complete Corynebacterium glutamicum ATCC 13032 genome sequence and its impact on the production of L-aspartate-derived amino acids and vitamins.</title>
        <authorList>
            <person name="Kalinowski J."/>
            <person name="Bathe B."/>
            <person name="Bartels D."/>
            <person name="Bischoff N."/>
            <person name="Bott M."/>
            <person name="Burkovski A."/>
            <person name="Dusch N."/>
            <person name="Eggeling L."/>
            <person name="Eikmanns B.J."/>
            <person name="Gaigalat L."/>
            <person name="Goesmann A."/>
            <person name="Hartmann M."/>
            <person name="Huthmacher K."/>
            <person name="Kraemer R."/>
            <person name="Linke B."/>
            <person name="McHardy A.C."/>
            <person name="Meyer F."/>
            <person name="Moeckel B."/>
            <person name="Pfefferle W."/>
            <person name="Puehler A."/>
            <person name="Rey D.A."/>
            <person name="Rueckert C."/>
            <person name="Rupp O."/>
            <person name="Sahm H."/>
            <person name="Wendisch V.F."/>
            <person name="Wiegraebe I."/>
            <person name="Tauch A."/>
        </authorList>
    </citation>
    <scope>NUCLEOTIDE SEQUENCE [LARGE SCALE GENOMIC DNA]</scope>
    <source>
        <strain>ATCC 13032 / DSM 20300 / JCM 1318 / BCRC 11384 / CCUG 27702 / LMG 3730 / NBRC 12168 / NCIMB 10025 / NRRL B-2784 / 534</strain>
    </source>
</reference>
<keyword id="KW-0029">Amino-acid transport</keyword>
<keyword id="KW-0067">ATP-binding</keyword>
<keyword id="KW-1003">Cell membrane</keyword>
<keyword id="KW-0472">Membrane</keyword>
<keyword id="KW-0547">Nucleotide-binding</keyword>
<keyword id="KW-1185">Reference proteome</keyword>
<keyword id="KW-1278">Translocase</keyword>
<keyword id="KW-0813">Transport</keyword>
<gene>
    <name evidence="3" type="primary">gluA</name>
    <name type="ordered locus">Cgl1950</name>
    <name type="ordered locus">cg2136</name>
</gene>
<organism>
    <name type="scientific">Corynebacterium glutamicum (strain ATCC 13032 / DSM 20300 / JCM 1318 / BCRC 11384 / CCUG 27702 / LMG 3730 / NBRC 12168 / NCIMB 10025 / NRRL B-2784 / 534)</name>
    <dbReference type="NCBI Taxonomy" id="196627"/>
    <lineage>
        <taxon>Bacteria</taxon>
        <taxon>Bacillati</taxon>
        <taxon>Actinomycetota</taxon>
        <taxon>Actinomycetes</taxon>
        <taxon>Mycobacteriales</taxon>
        <taxon>Corynebacteriaceae</taxon>
        <taxon>Corynebacterium</taxon>
    </lineage>
</organism>
<comment type="function">
    <text evidence="2">Part of the ABC transporter complex GluABCD involved in glutamate uptake. Probably responsible for energy coupling to the transport system.</text>
</comment>
<comment type="catalytic activity">
    <reaction evidence="5">
        <text>a polar amino acid(out) + ATP + H2O = a polar amino acid(in) + ADP + phosphate + H(+)</text>
        <dbReference type="Rhea" id="RHEA:14673"/>
        <dbReference type="ChEBI" id="CHEBI:15377"/>
        <dbReference type="ChEBI" id="CHEBI:15378"/>
        <dbReference type="ChEBI" id="CHEBI:30616"/>
        <dbReference type="ChEBI" id="CHEBI:43474"/>
        <dbReference type="ChEBI" id="CHEBI:62031"/>
        <dbReference type="ChEBI" id="CHEBI:456216"/>
        <dbReference type="EC" id="7.4.2.1"/>
    </reaction>
    <physiologicalReaction direction="left-to-right" evidence="5">
        <dbReference type="Rhea" id="RHEA:14674"/>
    </physiologicalReaction>
</comment>
<comment type="catalytic activity">
    <reaction evidence="5">
        <text>L-glutamate(out) + ATP + H2O = L-glutamate(in) + ADP + phosphate + H(+)</text>
        <dbReference type="Rhea" id="RHEA:29035"/>
        <dbReference type="ChEBI" id="CHEBI:15377"/>
        <dbReference type="ChEBI" id="CHEBI:15378"/>
        <dbReference type="ChEBI" id="CHEBI:29985"/>
        <dbReference type="ChEBI" id="CHEBI:30616"/>
        <dbReference type="ChEBI" id="CHEBI:43474"/>
        <dbReference type="ChEBI" id="CHEBI:456216"/>
    </reaction>
    <physiologicalReaction direction="left-to-right" evidence="5">
        <dbReference type="Rhea" id="RHEA:29036"/>
    </physiologicalReaction>
</comment>
<comment type="subunit">
    <text evidence="5">The complex is composed of two ATP-binding proteins (GluA), two transmembrane proteins (GluC and GluD) and a solute-binding protein (GluB).</text>
</comment>
<comment type="subcellular location">
    <subcellularLocation>
        <location evidence="4">Cell membrane</location>
        <topology evidence="4">Peripheral membrane protein</topology>
    </subcellularLocation>
</comment>
<comment type="disruption phenotype">
    <text evidence="2">Deletion of the gluABCD cluster almost abolishes glutamate uptake activity.</text>
</comment>
<comment type="similarity">
    <text evidence="4">Belongs to the ABC transporter superfamily.</text>
</comment>
<feature type="chain" id="PRO_0000092338" description="Glutamate transport ATP-binding protein GluA">
    <location>
        <begin position="1"/>
        <end position="242"/>
    </location>
</feature>
<feature type="domain" description="ABC transporter" evidence="1">
    <location>
        <begin position="2"/>
        <end position="236"/>
    </location>
</feature>
<feature type="binding site" evidence="1">
    <location>
        <begin position="34"/>
        <end position="41"/>
    </location>
    <ligand>
        <name>ATP</name>
        <dbReference type="ChEBI" id="CHEBI:30616"/>
    </ligand>
</feature>
<feature type="sequence conflict" description="In Ref. 1; CAA57060." evidence="4" ref="1">
    <original>R</original>
    <variation>C</variation>
    <location>
        <position position="149"/>
    </location>
</feature>
<proteinExistence type="evidence at protein level"/>
<accession>P48243</accession>
<dbReference type="EC" id="7.4.2.1" evidence="5"/>
<dbReference type="EMBL" id="X81191">
    <property type="protein sequence ID" value="CAA57060.1"/>
    <property type="molecule type" value="Genomic_DNA"/>
</dbReference>
<dbReference type="EMBL" id="BA000036">
    <property type="protein sequence ID" value="BAB99343.1"/>
    <property type="molecule type" value="Genomic_DNA"/>
</dbReference>
<dbReference type="EMBL" id="BX927153">
    <property type="protein sequence ID" value="CAF20291.1"/>
    <property type="molecule type" value="Genomic_DNA"/>
</dbReference>
<dbReference type="RefSeq" id="NP_601157.1">
    <property type="nucleotide sequence ID" value="NC_003450.3"/>
</dbReference>
<dbReference type="SMR" id="P48243"/>
<dbReference type="STRING" id="196627.cg2136"/>
<dbReference type="TCDB" id="3.A.1.3.9">
    <property type="family name" value="the atp-binding cassette (abc) superfamily"/>
</dbReference>
<dbReference type="KEGG" id="cgb:cg2136"/>
<dbReference type="KEGG" id="cgl:Cgl1950"/>
<dbReference type="PATRIC" id="fig|196627.13.peg.1888"/>
<dbReference type="eggNOG" id="COG1126">
    <property type="taxonomic scope" value="Bacteria"/>
</dbReference>
<dbReference type="HOGENOM" id="CLU_000604_1_22_11"/>
<dbReference type="OrthoDB" id="4398079at2"/>
<dbReference type="BioCyc" id="CORYNE:G18NG-11542-MONOMER"/>
<dbReference type="Proteomes" id="UP000000582">
    <property type="component" value="Chromosome"/>
</dbReference>
<dbReference type="Proteomes" id="UP000001009">
    <property type="component" value="Chromosome"/>
</dbReference>
<dbReference type="GO" id="GO:0005886">
    <property type="term" value="C:plasma membrane"/>
    <property type="evidence" value="ECO:0007669"/>
    <property type="project" value="UniProtKB-SubCell"/>
</dbReference>
<dbReference type="GO" id="GO:0015424">
    <property type="term" value="F:ABC-type amino acid transporter activity"/>
    <property type="evidence" value="ECO:0007669"/>
    <property type="project" value="InterPro"/>
</dbReference>
<dbReference type="GO" id="GO:0005524">
    <property type="term" value="F:ATP binding"/>
    <property type="evidence" value="ECO:0007669"/>
    <property type="project" value="UniProtKB-KW"/>
</dbReference>
<dbReference type="GO" id="GO:0016887">
    <property type="term" value="F:ATP hydrolysis activity"/>
    <property type="evidence" value="ECO:0007669"/>
    <property type="project" value="InterPro"/>
</dbReference>
<dbReference type="CDD" id="cd03262">
    <property type="entry name" value="ABC_HisP_GlnQ"/>
    <property type="match status" value="1"/>
</dbReference>
<dbReference type="FunFam" id="3.40.50.300:FF:000020">
    <property type="entry name" value="Amino acid ABC transporter ATP-binding component"/>
    <property type="match status" value="1"/>
</dbReference>
<dbReference type="Gene3D" id="3.40.50.300">
    <property type="entry name" value="P-loop containing nucleotide triphosphate hydrolases"/>
    <property type="match status" value="1"/>
</dbReference>
<dbReference type="InterPro" id="IPR003593">
    <property type="entry name" value="AAA+_ATPase"/>
</dbReference>
<dbReference type="InterPro" id="IPR030679">
    <property type="entry name" value="ABC_ATPase_HisP-typ"/>
</dbReference>
<dbReference type="InterPro" id="IPR003439">
    <property type="entry name" value="ABC_transporter-like_ATP-bd"/>
</dbReference>
<dbReference type="InterPro" id="IPR017871">
    <property type="entry name" value="ABC_transporter-like_CS"/>
</dbReference>
<dbReference type="InterPro" id="IPR050086">
    <property type="entry name" value="MetN_ABC_transporter-like"/>
</dbReference>
<dbReference type="InterPro" id="IPR027417">
    <property type="entry name" value="P-loop_NTPase"/>
</dbReference>
<dbReference type="PANTHER" id="PTHR43166">
    <property type="entry name" value="AMINO ACID IMPORT ATP-BINDING PROTEIN"/>
    <property type="match status" value="1"/>
</dbReference>
<dbReference type="PANTHER" id="PTHR43166:SF9">
    <property type="entry name" value="GLUTAMATE_ASPARTATE IMPORT ATP-BINDING PROTEIN GLTL"/>
    <property type="match status" value="1"/>
</dbReference>
<dbReference type="Pfam" id="PF00005">
    <property type="entry name" value="ABC_tran"/>
    <property type="match status" value="1"/>
</dbReference>
<dbReference type="PIRSF" id="PIRSF039085">
    <property type="entry name" value="ABC_ATPase_HisP"/>
    <property type="match status" value="1"/>
</dbReference>
<dbReference type="SMART" id="SM00382">
    <property type="entry name" value="AAA"/>
    <property type="match status" value="1"/>
</dbReference>
<dbReference type="SUPFAM" id="SSF52540">
    <property type="entry name" value="P-loop containing nucleoside triphosphate hydrolases"/>
    <property type="match status" value="1"/>
</dbReference>
<dbReference type="PROSITE" id="PS00211">
    <property type="entry name" value="ABC_TRANSPORTER_1"/>
    <property type="match status" value="1"/>
</dbReference>
<dbReference type="PROSITE" id="PS50893">
    <property type="entry name" value="ABC_TRANSPORTER_2"/>
    <property type="match status" value="1"/>
</dbReference>
<name>GLUA_CORGL</name>
<evidence type="ECO:0000255" key="1">
    <source>
        <dbReference type="PROSITE-ProRule" id="PRU00434"/>
    </source>
</evidence>
<evidence type="ECO:0000269" key="2">
    <source>
    </source>
</evidence>
<evidence type="ECO:0000303" key="3">
    <source>
    </source>
</evidence>
<evidence type="ECO:0000305" key="4"/>
<evidence type="ECO:0000305" key="5">
    <source>
    </source>
</evidence>
<protein>
    <recommendedName>
        <fullName evidence="4">Glutamate transport ATP-binding protein GluA</fullName>
        <ecNumber evidence="5">7.4.2.1</ecNumber>
    </recommendedName>
    <alternativeName>
        <fullName evidence="4">Glutamate uptake system protein GluA</fullName>
    </alternativeName>
</protein>